<dbReference type="EMBL" id="CP000108">
    <property type="protein sequence ID" value="ABB28452.1"/>
    <property type="molecule type" value="Genomic_DNA"/>
</dbReference>
<dbReference type="SMR" id="Q3ARC3"/>
<dbReference type="STRING" id="340177.Cag_1190"/>
<dbReference type="KEGG" id="cch:Cag_1190"/>
<dbReference type="eggNOG" id="COG0718">
    <property type="taxonomic scope" value="Bacteria"/>
</dbReference>
<dbReference type="HOGENOM" id="CLU_140930_0_1_10"/>
<dbReference type="OrthoDB" id="9808738at2"/>
<dbReference type="GO" id="GO:0043590">
    <property type="term" value="C:bacterial nucleoid"/>
    <property type="evidence" value="ECO:0007669"/>
    <property type="project" value="UniProtKB-UniRule"/>
</dbReference>
<dbReference type="GO" id="GO:0005829">
    <property type="term" value="C:cytosol"/>
    <property type="evidence" value="ECO:0007669"/>
    <property type="project" value="TreeGrafter"/>
</dbReference>
<dbReference type="GO" id="GO:0003677">
    <property type="term" value="F:DNA binding"/>
    <property type="evidence" value="ECO:0007669"/>
    <property type="project" value="UniProtKB-UniRule"/>
</dbReference>
<dbReference type="Gene3D" id="3.30.1310.10">
    <property type="entry name" value="Nucleoid-associated protein YbaB-like domain"/>
    <property type="match status" value="1"/>
</dbReference>
<dbReference type="HAMAP" id="MF_00274">
    <property type="entry name" value="DNA_YbaB_EbfC"/>
    <property type="match status" value="1"/>
</dbReference>
<dbReference type="InterPro" id="IPR036894">
    <property type="entry name" value="YbaB-like_sf"/>
</dbReference>
<dbReference type="InterPro" id="IPR004401">
    <property type="entry name" value="YbaB/EbfC"/>
</dbReference>
<dbReference type="NCBIfam" id="TIGR00103">
    <property type="entry name" value="DNA_YbaB_EbfC"/>
    <property type="match status" value="1"/>
</dbReference>
<dbReference type="PANTHER" id="PTHR33449">
    <property type="entry name" value="NUCLEOID-ASSOCIATED PROTEIN YBAB"/>
    <property type="match status" value="1"/>
</dbReference>
<dbReference type="PANTHER" id="PTHR33449:SF1">
    <property type="entry name" value="NUCLEOID-ASSOCIATED PROTEIN YBAB"/>
    <property type="match status" value="1"/>
</dbReference>
<dbReference type="Pfam" id="PF02575">
    <property type="entry name" value="YbaB_DNA_bd"/>
    <property type="match status" value="1"/>
</dbReference>
<dbReference type="PIRSF" id="PIRSF004555">
    <property type="entry name" value="UCP004555"/>
    <property type="match status" value="1"/>
</dbReference>
<dbReference type="SUPFAM" id="SSF82607">
    <property type="entry name" value="YbaB-like"/>
    <property type="match status" value="1"/>
</dbReference>
<gene>
    <name type="ordered locus">Cag_1190</name>
</gene>
<comment type="function">
    <text evidence="1">Binds to DNA and alters its conformation. May be involved in regulation of gene expression, nucleoid organization and DNA protection.</text>
</comment>
<comment type="subunit">
    <text evidence="1">Homodimer.</text>
</comment>
<comment type="subcellular location">
    <subcellularLocation>
        <location evidence="1">Cytoplasm</location>
        <location evidence="1">Nucleoid</location>
    </subcellularLocation>
</comment>
<comment type="similarity">
    <text evidence="1">Belongs to the YbaB/EbfC family.</text>
</comment>
<name>Y1190_CHLCH</name>
<reference key="1">
    <citation type="submission" date="2005-08" db="EMBL/GenBank/DDBJ databases">
        <title>Complete sequence of Chlorobium chlorochromatii CaD3.</title>
        <authorList>
            <consortium name="US DOE Joint Genome Institute"/>
            <person name="Copeland A."/>
            <person name="Lucas S."/>
            <person name="Lapidus A."/>
            <person name="Barry K."/>
            <person name="Detter J.C."/>
            <person name="Glavina T."/>
            <person name="Hammon N."/>
            <person name="Israni S."/>
            <person name="Pitluck S."/>
            <person name="Bryant D."/>
            <person name="Schmutz J."/>
            <person name="Larimer F."/>
            <person name="Land M."/>
            <person name="Kyrpides N."/>
            <person name="Ivanova N."/>
            <person name="Richardson P."/>
        </authorList>
    </citation>
    <scope>NUCLEOTIDE SEQUENCE [LARGE SCALE GENOMIC DNA]</scope>
    <source>
        <strain>CaD3</strain>
    </source>
</reference>
<sequence length="111" mass="11912">MAMPNLGDMMKQIQQAGEKMQEVQKQLERLVAHGEAGGGMVKATVSGKQKLLSLAIDPEIMDDYEMVQDLVVAAVNSALDASLKLAQDEIGKVTGGMMNPTELLKNLNLGQ</sequence>
<organism>
    <name type="scientific">Chlorobium chlorochromatii (strain CaD3)</name>
    <dbReference type="NCBI Taxonomy" id="340177"/>
    <lineage>
        <taxon>Bacteria</taxon>
        <taxon>Pseudomonadati</taxon>
        <taxon>Chlorobiota</taxon>
        <taxon>Chlorobiia</taxon>
        <taxon>Chlorobiales</taxon>
        <taxon>Chlorobiaceae</taxon>
        <taxon>Chlorobium/Pelodictyon group</taxon>
        <taxon>Chlorobium</taxon>
    </lineage>
</organism>
<protein>
    <recommendedName>
        <fullName evidence="1">Nucleoid-associated protein Cag_1190</fullName>
    </recommendedName>
</protein>
<keyword id="KW-0963">Cytoplasm</keyword>
<keyword id="KW-0238">DNA-binding</keyword>
<accession>Q3ARC3</accession>
<feature type="chain" id="PRO_1000003720" description="Nucleoid-associated protein Cag_1190">
    <location>
        <begin position="1"/>
        <end position="111"/>
    </location>
</feature>
<proteinExistence type="inferred from homology"/>
<evidence type="ECO:0000255" key="1">
    <source>
        <dbReference type="HAMAP-Rule" id="MF_00274"/>
    </source>
</evidence>